<keyword id="KW-0010">Activator</keyword>
<keyword id="KW-1005">Bacterial flagellum biogenesis</keyword>
<keyword id="KW-0963">Cytoplasm</keyword>
<keyword id="KW-0238">DNA-binding</keyword>
<keyword id="KW-0479">Metal-binding</keyword>
<keyword id="KW-0804">Transcription</keyword>
<keyword id="KW-0805">Transcription regulation</keyword>
<keyword id="KW-0862">Zinc</keyword>
<reference key="1">
    <citation type="submission" date="1998-11" db="EMBL/GenBank/DDBJ databases">
        <title>flhDC gene disruptions leads to pleiotropic phenotypes.</title>
        <authorList>
            <person name="Givaudan A.G."/>
            <person name="Lanois A."/>
        </authorList>
    </citation>
    <scope>NUCLEOTIDE SEQUENCE [GENOMIC DNA]</scope>
    <source>
        <strain>F1</strain>
    </source>
</reference>
<organism>
    <name type="scientific">Xenorhabdus nematophila</name>
    <name type="common">Achromobacter nematophilus</name>
    <dbReference type="NCBI Taxonomy" id="628"/>
    <lineage>
        <taxon>Bacteria</taxon>
        <taxon>Pseudomonadati</taxon>
        <taxon>Pseudomonadota</taxon>
        <taxon>Gammaproteobacteria</taxon>
        <taxon>Enterobacterales</taxon>
        <taxon>Morganellaceae</taxon>
        <taxon>Xenorhabdus</taxon>
    </lineage>
</organism>
<accession>Q9X9F3</accession>
<proteinExistence type="inferred from homology"/>
<sequence length="194" mass="21852">MVEKSIVQEAKDIQLAMELITLGARLQMLESETQLSRGRLIRLYKELRGSPPPKGMLPFSTDWFMTWEQNIHSSMFYNAYRFLLKSGHCEGVEVVVKAYRLYLEQCPPGNNGDAPILALTRAWTLVRFVDSGMLQPTECRCCGGTFITHAHQPVNSFVCSLCQPPSRAVKKRKLSPQPADTNSQLLDGFAQKAM</sequence>
<name>FLHC_XENNE</name>
<dbReference type="EMBL" id="AJ012828">
    <property type="protein sequence ID" value="CAB41408.1"/>
    <property type="molecule type" value="Genomic_DNA"/>
</dbReference>
<dbReference type="RefSeq" id="WP_010847228.1">
    <property type="nucleotide sequence ID" value="NZ_WUUN01000068.1"/>
</dbReference>
<dbReference type="SMR" id="Q9X9F3"/>
<dbReference type="GeneID" id="24905047"/>
<dbReference type="OMA" id="MLQLSAC"/>
<dbReference type="GO" id="GO:0005737">
    <property type="term" value="C:cytoplasm"/>
    <property type="evidence" value="ECO:0007669"/>
    <property type="project" value="UniProtKB-SubCell"/>
</dbReference>
<dbReference type="GO" id="GO:0003677">
    <property type="term" value="F:DNA binding"/>
    <property type="evidence" value="ECO:0007669"/>
    <property type="project" value="UniProtKB-UniRule"/>
</dbReference>
<dbReference type="GO" id="GO:0008270">
    <property type="term" value="F:zinc ion binding"/>
    <property type="evidence" value="ECO:0007669"/>
    <property type="project" value="UniProtKB-UniRule"/>
</dbReference>
<dbReference type="GO" id="GO:0044781">
    <property type="term" value="P:bacterial-type flagellum organization"/>
    <property type="evidence" value="ECO:0007669"/>
    <property type="project" value="UniProtKB-KW"/>
</dbReference>
<dbReference type="GO" id="GO:0045893">
    <property type="term" value="P:positive regulation of DNA-templated transcription"/>
    <property type="evidence" value="ECO:0007669"/>
    <property type="project" value="InterPro"/>
</dbReference>
<dbReference type="GO" id="GO:1902208">
    <property type="term" value="P:regulation of bacterial-type flagellum assembly"/>
    <property type="evidence" value="ECO:0007669"/>
    <property type="project" value="UniProtKB-UniRule"/>
</dbReference>
<dbReference type="HAMAP" id="MF_01891">
    <property type="entry name" value="FhlC"/>
    <property type="match status" value="1"/>
</dbReference>
<dbReference type="InterPro" id="IPR007944">
    <property type="entry name" value="FlhC"/>
</dbReference>
<dbReference type="NCBIfam" id="NF009365">
    <property type="entry name" value="PRK12722.1"/>
    <property type="match status" value="1"/>
</dbReference>
<dbReference type="Pfam" id="PF05280">
    <property type="entry name" value="FlhC"/>
    <property type="match status" value="1"/>
</dbReference>
<dbReference type="PIRSF" id="PIRSF003159">
    <property type="entry name" value="FlhC"/>
    <property type="match status" value="1"/>
</dbReference>
<dbReference type="SUPFAM" id="SSF160930">
    <property type="entry name" value="FlhC-like"/>
    <property type="match status" value="1"/>
</dbReference>
<comment type="function">
    <text evidence="1">Functions in complex with FlhD as a master transcriptional regulator that regulates transcription of several flagellar and non-flagellar operons by binding to their promoter region. Activates expression of class 2 flagellar genes, including fliA, which is a flagellum-specific sigma factor that turns on the class 3 genes. Also regulates genes whose products function in a variety of physiological pathways.</text>
</comment>
<comment type="cofactor">
    <cofactor evidence="1">
        <name>Zn(2+)</name>
        <dbReference type="ChEBI" id="CHEBI:29105"/>
    </cofactor>
    <text evidence="1">Binds 1 zinc ion per subunit.</text>
</comment>
<comment type="subunit">
    <text evidence="1">Heterohexamer composed of two FlhC and four FlhD subunits. Each FlhC binds a FlhD dimer, forming a heterotrimer, and a hexamer assembles by dimerization of two heterotrimers.</text>
</comment>
<comment type="subcellular location">
    <subcellularLocation>
        <location evidence="1">Cytoplasm</location>
    </subcellularLocation>
</comment>
<comment type="similarity">
    <text evidence="1">Belongs to the FlhC family.</text>
</comment>
<protein>
    <recommendedName>
        <fullName evidence="1">Flagellar transcriptional regulator FlhC</fullName>
    </recommendedName>
</protein>
<gene>
    <name evidence="1" type="primary">flhC</name>
</gene>
<feature type="chain" id="PRO_0000064345" description="Flagellar transcriptional regulator FlhC">
    <location>
        <begin position="1"/>
        <end position="194"/>
    </location>
</feature>
<feature type="binding site" evidence="1">
    <location>
        <position position="139"/>
    </location>
    <ligand>
        <name>Zn(2+)</name>
        <dbReference type="ChEBI" id="CHEBI:29105"/>
    </ligand>
</feature>
<feature type="binding site" evidence="1">
    <location>
        <position position="142"/>
    </location>
    <ligand>
        <name>Zn(2+)</name>
        <dbReference type="ChEBI" id="CHEBI:29105"/>
    </ligand>
</feature>
<feature type="binding site" evidence="1">
    <location>
        <position position="159"/>
    </location>
    <ligand>
        <name>Zn(2+)</name>
        <dbReference type="ChEBI" id="CHEBI:29105"/>
    </ligand>
</feature>
<feature type="binding site" evidence="1">
    <location>
        <position position="162"/>
    </location>
    <ligand>
        <name>Zn(2+)</name>
        <dbReference type="ChEBI" id="CHEBI:29105"/>
    </ligand>
</feature>
<evidence type="ECO:0000255" key="1">
    <source>
        <dbReference type="HAMAP-Rule" id="MF_01891"/>
    </source>
</evidence>